<comment type="function">
    <text evidence="4 7">Copper amine oxidase, part of the gene cluster that mediates the biosynthesis of the secondary metabolite victorin, the molecular basis for Victoria blight of oats (PubMed:32929037). Within the pathway, vicK1 catalyzes the oxidative deamination of the N-terminal glycyl moiety of the hexapeptides in order to produce the active glyoxylate form victorins (PubMed:32929037). The pathway starts with the processing of the precursor vicA1 by several endopeptidases including kexin proteases as well as the cluster-specific S28 family peptidases vicPa and vicPb to produce 7 identical copies of the hexapeptide Gly-Leu-Lys-Leu-Ala-Phe. After being excised from the precursor peptide, the core peptides are cyclized and modified post-translationally by enzymes encoded within the gene cluster. The ustYa family oxidase vicYb is required for the formation of the macrocycle in victorin and the copper amine oxidases (CAOs) vicK1 and vicK2 are responsible for converting victorin to the active form by oxidizing the N-terminal glycyl residue in the peptides to glyoxylate. Relaxed substrate specificity of enzymes in the victorin biosynthetic pathway results in a metabolic grid that produces a set of analogs including victorinines B, C, E or HV-toxin M (Probable).</text>
</comment>
<comment type="cofactor">
    <cofactor evidence="2">
        <name>Cu cation</name>
        <dbReference type="ChEBI" id="CHEBI:23378"/>
    </cofactor>
    <text evidence="2">Binds 1 copper ion per subunit.</text>
</comment>
<comment type="cofactor">
    <cofactor evidence="2">
        <name>Ca(2+)</name>
        <dbReference type="ChEBI" id="CHEBI:29108"/>
    </cofactor>
    <text evidence="2">Binds 2 calcium ions per subunit.</text>
</comment>
<comment type="cofactor">
    <cofactor evidence="2">
        <name>L-topaquinone</name>
        <dbReference type="ChEBI" id="CHEBI:79027"/>
    </cofactor>
    <text evidence="2">Contains 1 topaquinone per subunit.</text>
</comment>
<comment type="pathway">
    <text evidence="4">Mycotoxin biosynthesis.</text>
</comment>
<comment type="subunit">
    <text evidence="2">Homodimer; disulfide-linked.</text>
</comment>
<comment type="PTM">
    <text evidence="1">Topaquinone (TPQ) is generated by copper-dependent autoxidation of a specific tyrosyl residue.</text>
</comment>
<comment type="disruption phenotype">
    <text evidence="4">Leads to the accumu-lation of new glycine-containing victorin derivatives.</text>
</comment>
<comment type="similarity">
    <text evidence="6">Belongs to the copper/topaquinone oxidase family.</text>
</comment>
<sequence>MKLFLLFTLTLVNIFSVSLQEPIQNQPAGNNTITSPHRNVWRALSEAEFSGVSAVLVHQLNLTTSRGGNRIIQIDYLYPNKSDVLLFLDHNGEEPKRYARATVQFGSPEVPYLQEYRIGPLPATNTTAVEPLRFPFNGKVQGKTKITSLDADGIDAFLPQLSSVVEDITRKLWNTTLAEGGVSFNLGKASFNSDSTQTIWLGFLNNATTGFDSSTLLPLGVSMQLDITSRDYNDWFVLYWFYNNKLYTPTSFNETVYSSDFQPPLANIDGPWTSTNKQEPTFLLDDLPPPKAISRGKNRYNLDTEENYVQWMDFSFYFSSHTDRGLSLFNVVYKSKRIIYELSLQEALAHYAGVEPVPSEAVYFDTQTGMGRSMISLIKGYDCPDYATYLNSSFSSRTGVTITPDAICLFESDSQFPLRRHTSQAFGYASAARNVVFTVRWIATVGNYDYLFDYDFFYDGAIEVKVRASGYIQGAYYAGNEEYGFKIHDALSGSMHDHVMTFKADLDIYGEKNSVQKVEVVPETTIYPWSQGQPHNTMKLNRGFVTSETDSSIDWAADDAISYTIVNKDSPNKYGEYPGYRFRRVAPAIHLTVKNSTSGGKALHYATHDLFITQQKDNEPCAADRNNAYNIDDPLVDFEKFLDGESLEQEDLVLWINMGMHHTPHTEDLPNTIMTSAYSGIRFEPFNYLESGDPSVKSAQQARIILSNS</sequence>
<gene>
    <name evidence="5" type="primary">VicK1</name>
    <name type="ORF">COCVIDRAFT_21377</name>
</gene>
<organism>
    <name type="scientific">Bipolaris victoriae (strain FI3)</name>
    <name type="common">Victoria blight of oats agent</name>
    <name type="synonym">Cochliobolus victoriae</name>
    <dbReference type="NCBI Taxonomy" id="930091"/>
    <lineage>
        <taxon>Eukaryota</taxon>
        <taxon>Fungi</taxon>
        <taxon>Dikarya</taxon>
        <taxon>Ascomycota</taxon>
        <taxon>Pezizomycotina</taxon>
        <taxon>Dothideomycetes</taxon>
        <taxon>Pleosporomycetidae</taxon>
        <taxon>Pleosporales</taxon>
        <taxon>Pleosporineae</taxon>
        <taxon>Pleosporaceae</taxon>
        <taxon>Bipolaris</taxon>
    </lineage>
</organism>
<keyword id="KW-0106">Calcium</keyword>
<keyword id="KW-0186">Copper</keyword>
<keyword id="KW-1015">Disulfide bond</keyword>
<keyword id="KW-0479">Metal-binding</keyword>
<keyword id="KW-0560">Oxidoreductase</keyword>
<keyword id="KW-0732">Signal</keyword>
<keyword id="KW-0801">TPQ</keyword>
<name>VICK1_BIPV3</name>
<dbReference type="EC" id="1.4.3.-" evidence="4"/>
<dbReference type="EMBL" id="KI969034">
    <property type="protein sequence ID" value="EUN20452.1"/>
    <property type="molecule type" value="Genomic_DNA"/>
</dbReference>
<dbReference type="RefSeq" id="XP_014550026.1">
    <property type="nucleotide sequence ID" value="XM_014694540.1"/>
</dbReference>
<dbReference type="SMR" id="W7E8S5"/>
<dbReference type="GeneID" id="26252699"/>
<dbReference type="HOGENOM" id="CLU_015739_0_0_1"/>
<dbReference type="OrthoDB" id="5859at28556"/>
<dbReference type="Proteomes" id="UP000054337">
    <property type="component" value="Unassembled WGS sequence"/>
</dbReference>
<dbReference type="GO" id="GO:0005886">
    <property type="term" value="C:plasma membrane"/>
    <property type="evidence" value="ECO:0007669"/>
    <property type="project" value="TreeGrafter"/>
</dbReference>
<dbReference type="GO" id="GO:0005507">
    <property type="term" value="F:copper ion binding"/>
    <property type="evidence" value="ECO:0007669"/>
    <property type="project" value="InterPro"/>
</dbReference>
<dbReference type="GO" id="GO:0008131">
    <property type="term" value="F:primary methylamine oxidase activity"/>
    <property type="evidence" value="ECO:0007669"/>
    <property type="project" value="InterPro"/>
</dbReference>
<dbReference type="GO" id="GO:0048038">
    <property type="term" value="F:quinone binding"/>
    <property type="evidence" value="ECO:0007669"/>
    <property type="project" value="InterPro"/>
</dbReference>
<dbReference type="GO" id="GO:0009308">
    <property type="term" value="P:amine metabolic process"/>
    <property type="evidence" value="ECO:0007669"/>
    <property type="project" value="InterPro"/>
</dbReference>
<dbReference type="Gene3D" id="3.10.450.40">
    <property type="match status" value="2"/>
</dbReference>
<dbReference type="Gene3D" id="2.70.98.20">
    <property type="entry name" value="Copper amine oxidase, catalytic domain"/>
    <property type="match status" value="1"/>
</dbReference>
<dbReference type="InterPro" id="IPR000269">
    <property type="entry name" value="Cu_amine_oxidase"/>
</dbReference>
<dbReference type="InterPro" id="IPR015798">
    <property type="entry name" value="Cu_amine_oxidase_C"/>
</dbReference>
<dbReference type="InterPro" id="IPR036460">
    <property type="entry name" value="Cu_amine_oxidase_C_sf"/>
</dbReference>
<dbReference type="InterPro" id="IPR016182">
    <property type="entry name" value="Cu_amine_oxidase_N-reg"/>
</dbReference>
<dbReference type="InterPro" id="IPR015800">
    <property type="entry name" value="Cu_amine_oxidase_N2"/>
</dbReference>
<dbReference type="InterPro" id="IPR015328">
    <property type="entry name" value="DUF1965"/>
</dbReference>
<dbReference type="PANTHER" id="PTHR10638:SF20">
    <property type="entry name" value="AMINE OXIDASE"/>
    <property type="match status" value="1"/>
</dbReference>
<dbReference type="PANTHER" id="PTHR10638">
    <property type="entry name" value="COPPER AMINE OXIDASE"/>
    <property type="match status" value="1"/>
</dbReference>
<dbReference type="Pfam" id="PF01179">
    <property type="entry name" value="Cu_amine_oxid"/>
    <property type="match status" value="1"/>
</dbReference>
<dbReference type="Pfam" id="PF02727">
    <property type="entry name" value="Cu_amine_oxidN2"/>
    <property type="match status" value="1"/>
</dbReference>
<dbReference type="Pfam" id="PF09248">
    <property type="entry name" value="DUF1965"/>
    <property type="match status" value="1"/>
</dbReference>
<dbReference type="PRINTS" id="PR00766">
    <property type="entry name" value="CUDAOXIDASE"/>
</dbReference>
<dbReference type="SUPFAM" id="SSF49998">
    <property type="entry name" value="Amine oxidase catalytic domain"/>
    <property type="match status" value="1"/>
</dbReference>
<dbReference type="SUPFAM" id="SSF54416">
    <property type="entry name" value="Amine oxidase N-terminal region"/>
    <property type="match status" value="2"/>
</dbReference>
<evidence type="ECO:0000250" key="1">
    <source>
        <dbReference type="UniProtKB" id="P12807"/>
    </source>
</evidence>
<evidence type="ECO:0000250" key="2">
    <source>
        <dbReference type="UniProtKB" id="P19801"/>
    </source>
</evidence>
<evidence type="ECO:0000255" key="3"/>
<evidence type="ECO:0000269" key="4">
    <source>
    </source>
</evidence>
<evidence type="ECO:0000303" key="5">
    <source>
    </source>
</evidence>
<evidence type="ECO:0000305" key="6"/>
<evidence type="ECO:0000305" key="7">
    <source>
    </source>
</evidence>
<reference key="1">
    <citation type="journal article" date="2013" name="PLoS Genet.">
        <title>Comparative genome structure, secondary metabolite, and effector coding capacity across Cochliobolus pathogens.</title>
        <authorList>
            <person name="Condon B.J."/>
            <person name="Leng Y."/>
            <person name="Wu D."/>
            <person name="Bushley K.E."/>
            <person name="Ohm R.A."/>
            <person name="Otillar R."/>
            <person name="Martin J."/>
            <person name="Schackwitz W."/>
            <person name="Grimwood J."/>
            <person name="MohdZainudin N."/>
            <person name="Xue C."/>
            <person name="Wang R."/>
            <person name="Manning V.A."/>
            <person name="Dhillon B."/>
            <person name="Tu Z.J."/>
            <person name="Steffenson B.J."/>
            <person name="Salamov A."/>
            <person name="Sun H."/>
            <person name="Lowry S."/>
            <person name="LaButti K."/>
            <person name="Han J."/>
            <person name="Copeland A."/>
            <person name="Lindquist E."/>
            <person name="Barry K."/>
            <person name="Schmutz J."/>
            <person name="Baker S.E."/>
            <person name="Ciuffetti L.M."/>
            <person name="Grigoriev I.V."/>
            <person name="Zhong S."/>
            <person name="Turgeon B.G."/>
        </authorList>
    </citation>
    <scope>NUCLEOTIDE SEQUENCE [LARGE SCALE GENOMIC DNA]</scope>
    <source>
        <strain>FI3</strain>
    </source>
</reference>
<reference key="2">
    <citation type="journal article" date="2020" name="Proc. Natl. Acad. Sci. U.S.A.">
        <title>Victorin, the host-selective cyclic peptide toxin from the oat pathogen Cochliobolus victoriae, is ribosomally encoded.</title>
        <authorList>
            <person name="Kessler S.C."/>
            <person name="Zhang X."/>
            <person name="McDonald M.C."/>
            <person name="Gilchrist C.L.M."/>
            <person name="Lin Z."/>
            <person name="Rightmyer A."/>
            <person name="Solomon P.S."/>
            <person name="Turgeon B.G."/>
            <person name="Chooi Y.H."/>
        </authorList>
    </citation>
    <scope>FUNCTION</scope>
    <scope>DISRUPTION PHENOTYPE</scope>
    <scope>CATALYTIC ACTIVITY</scope>
    <scope>PATHWAY</scope>
</reference>
<protein>
    <recommendedName>
        <fullName evidence="5">Copper amine oxidase vicK1</fullName>
        <shortName evidence="5">CAO vicK1</shortName>
        <ecNumber evidence="4">1.4.3.-</ecNumber>
    </recommendedName>
    <alternativeName>
        <fullName evidence="5">Victorin biosynthesis cluster protein K1</fullName>
    </alternativeName>
</protein>
<proteinExistence type="evidence at protein level"/>
<feature type="signal peptide" evidence="3">
    <location>
        <begin position="1"/>
        <end position="20"/>
    </location>
</feature>
<feature type="chain" id="PRO_5004891358" description="Copper amine oxidase vicK1">
    <location>
        <begin position="21"/>
        <end position="709"/>
    </location>
</feature>
<feature type="active site" description="Proton acceptor" evidence="2">
    <location>
        <position position="365"/>
    </location>
</feature>
<feature type="active site" description="Schiff-base intermediate with substrate; via topaquinone" evidence="2">
    <location>
        <position position="448"/>
    </location>
</feature>
<feature type="binding site" evidence="2">
    <location>
        <position position="496"/>
    </location>
    <ligand>
        <name>Cu cation</name>
        <dbReference type="ChEBI" id="CHEBI:23378"/>
    </ligand>
</feature>
<feature type="binding site" evidence="2">
    <location>
        <position position="498"/>
    </location>
    <ligand>
        <name>Cu cation</name>
        <dbReference type="ChEBI" id="CHEBI:23378"/>
    </ligand>
</feature>
<feature type="binding site" evidence="2">
    <location>
        <position position="505"/>
    </location>
    <ligand>
        <name>Ca(2+)</name>
        <dbReference type="ChEBI" id="CHEBI:29108"/>
        <label>1</label>
    </ligand>
</feature>
<feature type="binding site" evidence="2">
    <location>
        <position position="506"/>
    </location>
    <ligand>
        <name>Ca(2+)</name>
        <dbReference type="ChEBI" id="CHEBI:29108"/>
        <label>1</label>
    </ligand>
</feature>
<feature type="binding site" evidence="2">
    <location>
        <position position="507"/>
    </location>
    <ligand>
        <name>Ca(2+)</name>
        <dbReference type="ChEBI" id="CHEBI:29108"/>
        <label>1</label>
    </ligand>
</feature>
<feature type="binding site" evidence="2">
    <location>
        <position position="548"/>
    </location>
    <ligand>
        <name>Ca(2+)</name>
        <dbReference type="ChEBI" id="CHEBI:29108"/>
        <label>2</label>
    </ligand>
</feature>
<feature type="binding site" evidence="2">
    <location>
        <position position="641"/>
    </location>
    <ligand>
        <name>Ca(2+)</name>
        <dbReference type="ChEBI" id="CHEBI:29108"/>
        <label>2</label>
    </ligand>
</feature>
<feature type="binding site" evidence="2">
    <location>
        <position position="645"/>
    </location>
    <ligand>
        <name>Ca(2+)</name>
        <dbReference type="ChEBI" id="CHEBI:29108"/>
        <label>2</label>
    </ligand>
</feature>
<feature type="binding site" evidence="2">
    <location>
        <position position="651"/>
    </location>
    <ligand>
        <name>Ca(2+)</name>
        <dbReference type="ChEBI" id="CHEBI:29108"/>
        <label>1</label>
    </ligand>
</feature>
<feature type="binding site" evidence="2">
    <location>
        <position position="652"/>
    </location>
    <ligand>
        <name>Ca(2+)</name>
        <dbReference type="ChEBI" id="CHEBI:29108"/>
        <label>1</label>
    </ligand>
</feature>
<feature type="binding site" evidence="2">
    <location>
        <position position="662"/>
    </location>
    <ligand>
        <name>Cu cation</name>
        <dbReference type="ChEBI" id="CHEBI:23378"/>
    </ligand>
</feature>
<feature type="modified residue" description="2',4',5'-topaquinone" evidence="1">
    <location>
        <position position="448"/>
    </location>
</feature>
<feature type="disulfide bond" evidence="2">
    <location>
        <begin position="383"/>
        <end position="408"/>
    </location>
</feature>
<accession>W7E8S5</accession>